<dbReference type="EMBL" id="M18421">
    <property type="protein sequence ID" value="AAA48595.1"/>
    <property type="molecule type" value="mRNA"/>
</dbReference>
<dbReference type="PIR" id="A29626">
    <property type="entry name" value="A29626"/>
</dbReference>
<dbReference type="SMR" id="P11682"/>
<dbReference type="FunCoup" id="P11682">
    <property type="interactions" value="765"/>
</dbReference>
<dbReference type="STRING" id="9031.ENSGALP00000026550"/>
<dbReference type="GlyCosmos" id="P11682">
    <property type="glycosylation" value="1 site, No reported glycans"/>
</dbReference>
<dbReference type="GlyGen" id="P11682">
    <property type="glycosylation" value="1 site"/>
</dbReference>
<dbReference type="PaxDb" id="9031-ENSGALP00000026550"/>
<dbReference type="VEuPathDB" id="HostDB:geneid_396535"/>
<dbReference type="eggNOG" id="KOG4338">
    <property type="taxonomic scope" value="Eukaryota"/>
</dbReference>
<dbReference type="InParanoid" id="P11682"/>
<dbReference type="OrthoDB" id="6484170at2759"/>
<dbReference type="PhylomeDB" id="P11682"/>
<dbReference type="Proteomes" id="UP000000539">
    <property type="component" value="Unassembled WGS sequence"/>
</dbReference>
<dbReference type="GO" id="GO:0042627">
    <property type="term" value="C:chylomicron"/>
    <property type="evidence" value="ECO:0007669"/>
    <property type="project" value="UniProtKB-KW"/>
</dbReference>
<dbReference type="GO" id="GO:0005737">
    <property type="term" value="C:cytoplasm"/>
    <property type="evidence" value="ECO:0007669"/>
    <property type="project" value="UniProtKB-SubCell"/>
</dbReference>
<dbReference type="GO" id="GO:0005811">
    <property type="term" value="C:lipid droplet"/>
    <property type="evidence" value="ECO:0007669"/>
    <property type="project" value="UniProtKB-SubCell"/>
</dbReference>
<dbReference type="GO" id="GO:0034362">
    <property type="term" value="C:low-density lipoprotein particle"/>
    <property type="evidence" value="ECO:0007669"/>
    <property type="project" value="UniProtKB-KW"/>
</dbReference>
<dbReference type="GO" id="GO:0034361">
    <property type="term" value="C:very-low-density lipoprotein particle"/>
    <property type="evidence" value="ECO:0007669"/>
    <property type="project" value="UniProtKB-KW"/>
</dbReference>
<dbReference type="GO" id="GO:0008201">
    <property type="term" value="F:heparin binding"/>
    <property type="evidence" value="ECO:0007669"/>
    <property type="project" value="UniProtKB-KW"/>
</dbReference>
<dbReference type="GO" id="GO:0008203">
    <property type="term" value="P:cholesterol metabolic process"/>
    <property type="evidence" value="ECO:0007669"/>
    <property type="project" value="UniProtKB-KW"/>
</dbReference>
<dbReference type="GO" id="GO:0006869">
    <property type="term" value="P:lipid transport"/>
    <property type="evidence" value="ECO:0007669"/>
    <property type="project" value="UniProtKB-KW"/>
</dbReference>
<dbReference type="InterPro" id="IPR022176">
    <property type="entry name" value="ApoB100_C"/>
</dbReference>
<dbReference type="InterPro" id="IPR052418">
    <property type="entry name" value="Apolipoprotein_B"/>
</dbReference>
<dbReference type="PANTHER" id="PTHR13769">
    <property type="entry name" value="APOLIPOPROTEIN B"/>
    <property type="match status" value="1"/>
</dbReference>
<dbReference type="PANTHER" id="PTHR13769:SF1">
    <property type="entry name" value="APOLIPOPROTEIN B-100"/>
    <property type="match status" value="1"/>
</dbReference>
<dbReference type="Pfam" id="PF12491">
    <property type="entry name" value="ApoB100_C"/>
    <property type="match status" value="1"/>
</dbReference>
<evidence type="ECO:0000250" key="1">
    <source>
        <dbReference type="UniProtKB" id="P04114"/>
    </source>
</evidence>
<evidence type="ECO:0000255" key="2"/>
<comment type="function">
    <text>Apolipoprotein B is a major protein constituent of chylomicrons, VLDL and LDL. It functions as a recognition signal for the cellular binding and internalization of LDL particles by the apoB/E receptor.</text>
</comment>
<comment type="subcellular location">
    <subcellularLocation>
        <location evidence="1">Cytoplasm</location>
    </subcellularLocation>
    <subcellularLocation>
        <location evidence="1">Secreted</location>
    </subcellularLocation>
    <subcellularLocation>
        <location evidence="1">Lipid droplet</location>
    </subcellularLocation>
</comment>
<comment type="induction">
    <text>Within 24 hours after estradiol administration, APOB mRNA is increased five- to seven-fold in liver but is unchanged in intestine and kidney.</text>
</comment>
<name>APOB_CHICK</name>
<keyword id="KW-0153">Cholesterol metabolism</keyword>
<keyword id="KW-0162">Chylomicron</keyword>
<keyword id="KW-0963">Cytoplasm</keyword>
<keyword id="KW-0325">Glycoprotein</keyword>
<keyword id="KW-0358">Heparin-binding</keyword>
<keyword id="KW-0427">LDL</keyword>
<keyword id="KW-0551">Lipid droplet</keyword>
<keyword id="KW-0443">Lipid metabolism</keyword>
<keyword id="KW-0445">Lipid transport</keyword>
<keyword id="KW-1185">Reference proteome</keyword>
<keyword id="KW-0964">Secreted</keyword>
<keyword id="KW-0753">Steroid metabolism</keyword>
<keyword id="KW-1207">Sterol metabolism</keyword>
<keyword id="KW-0813">Transport</keyword>
<keyword id="KW-0850">VLDL</keyword>
<protein>
    <recommendedName>
        <fullName>Apolipoprotein B</fullName>
    </recommendedName>
</protein>
<organism>
    <name type="scientific">Gallus gallus</name>
    <name type="common">Chicken</name>
    <dbReference type="NCBI Taxonomy" id="9031"/>
    <lineage>
        <taxon>Eukaryota</taxon>
        <taxon>Metazoa</taxon>
        <taxon>Chordata</taxon>
        <taxon>Craniata</taxon>
        <taxon>Vertebrata</taxon>
        <taxon>Euteleostomi</taxon>
        <taxon>Archelosauria</taxon>
        <taxon>Archosauria</taxon>
        <taxon>Dinosauria</taxon>
        <taxon>Saurischia</taxon>
        <taxon>Theropoda</taxon>
        <taxon>Coelurosauria</taxon>
        <taxon>Aves</taxon>
        <taxon>Neognathae</taxon>
        <taxon>Galloanserae</taxon>
        <taxon>Galliformes</taxon>
        <taxon>Phasianidae</taxon>
        <taxon>Phasianinae</taxon>
        <taxon>Gallus</taxon>
    </lineage>
</organism>
<gene>
    <name type="primary">APOB</name>
</gene>
<reference key="1">
    <citation type="journal article" date="1987" name="Gene">
        <title>Regulation of chicken apolipoprotein B: cloning, tissue distribution, and estrogen induction of mRNA.</title>
        <authorList>
            <person name="Kirchgessner T.G."/>
            <person name="Heinzmann C."/>
            <person name="Svenson K.L."/>
            <person name="Gordon D.A."/>
            <person name="Nicosia M."/>
            <person name="Lebherz H.G."/>
            <person name="Lusis A.J."/>
            <person name="Williams D.L."/>
        </authorList>
    </citation>
    <scope>NUCLEOTIDE SEQUENCE [MRNA]</scope>
</reference>
<feature type="chain" id="PRO_0000064638" description="Apolipoprotein B">
    <location>
        <begin position="1" status="less than"/>
        <end position="433"/>
    </location>
</feature>
<feature type="glycosylation site" description="N-linked (GlcNAc...) asparagine" evidence="2">
    <location>
        <position position="158"/>
    </location>
</feature>
<feature type="non-terminal residue">
    <location>
        <position position="1"/>
    </location>
</feature>
<proteinExistence type="evidence at transcript level"/>
<sequence length="433" mass="50848">IPGLSEKYTGEELYLMTTEKAAKTADICLSKLQEYFDALIAAISELEVRVPASETILRGRNVLDQIKEMLKHLQEKIRQTFVTLQEADFAGKLNRLKQVVQKTFQKAGNMVRSLQSKNFEDIKVQMQQLYKDAMASDYAHKLRSLAENVKKYISQIKNFSQKTLQKLSENLQQLVLYIKALREEYFDPTTLGWSVKYYEVEDKVLGLLKNLMDTLVIWYNEYAKDLSDLVTRLTDQVRELVENYRQEYYDLITDVEGKGRQKVMELSSAAQEKIRYWSAVAKRKINEHNRQVKAKLQEIYGQLSDSQEKLINVAKMLIDLTVEKYSTFMKYIFELLRWFEQATADSIKPYIAVREGELRIDVPFDWEYINQMPQKSREALRNKVELTRALIQQGVEQGTRKWEEMQAFIDEQLATEQLSFQQIVENIQKRMKT</sequence>
<accession>P11682</accession>